<dbReference type="EC" id="4.1.3.17"/>
<dbReference type="EC" id="4.1.1.112"/>
<dbReference type="EMBL" id="CR931997">
    <property type="protein sequence ID" value="CAI37064.1"/>
    <property type="molecule type" value="Genomic_DNA"/>
</dbReference>
<dbReference type="RefSeq" id="WP_011273490.1">
    <property type="nucleotide sequence ID" value="NC_007164.1"/>
</dbReference>
<dbReference type="SMR" id="Q4JVU3"/>
<dbReference type="STRING" id="306537.jk0900"/>
<dbReference type="KEGG" id="cjk:jk0900"/>
<dbReference type="eggNOG" id="COG0684">
    <property type="taxonomic scope" value="Bacteria"/>
</dbReference>
<dbReference type="HOGENOM" id="CLU_072626_4_0_11"/>
<dbReference type="OrthoDB" id="943692at2"/>
<dbReference type="Proteomes" id="UP000000545">
    <property type="component" value="Chromosome"/>
</dbReference>
<dbReference type="GO" id="GO:0047443">
    <property type="term" value="F:4-hydroxy-4-methyl-2-oxoglutarate aldolase activity"/>
    <property type="evidence" value="ECO:0007669"/>
    <property type="project" value="UniProtKB-EC"/>
</dbReference>
<dbReference type="GO" id="GO:0046872">
    <property type="term" value="F:metal ion binding"/>
    <property type="evidence" value="ECO:0007669"/>
    <property type="project" value="UniProtKB-KW"/>
</dbReference>
<dbReference type="GO" id="GO:0008948">
    <property type="term" value="F:oxaloacetate decarboxylase activity"/>
    <property type="evidence" value="ECO:0007669"/>
    <property type="project" value="UniProtKB-EC"/>
</dbReference>
<dbReference type="GO" id="GO:0008428">
    <property type="term" value="F:ribonuclease inhibitor activity"/>
    <property type="evidence" value="ECO:0007669"/>
    <property type="project" value="InterPro"/>
</dbReference>
<dbReference type="GO" id="GO:0051252">
    <property type="term" value="P:regulation of RNA metabolic process"/>
    <property type="evidence" value="ECO:0007669"/>
    <property type="project" value="InterPro"/>
</dbReference>
<dbReference type="CDD" id="cd16841">
    <property type="entry name" value="RraA_family"/>
    <property type="match status" value="1"/>
</dbReference>
<dbReference type="Gene3D" id="3.50.30.40">
    <property type="entry name" value="Ribonuclease E inhibitor RraA/RraA-like"/>
    <property type="match status" value="1"/>
</dbReference>
<dbReference type="InterPro" id="IPR010203">
    <property type="entry name" value="RraA"/>
</dbReference>
<dbReference type="InterPro" id="IPR005493">
    <property type="entry name" value="RraA/RraA-like"/>
</dbReference>
<dbReference type="InterPro" id="IPR036704">
    <property type="entry name" value="RraA/RraA-like_sf"/>
</dbReference>
<dbReference type="NCBIfam" id="TIGR01935">
    <property type="entry name" value="NOT-MenG"/>
    <property type="match status" value="1"/>
</dbReference>
<dbReference type="NCBIfam" id="NF006875">
    <property type="entry name" value="PRK09372.1"/>
    <property type="match status" value="1"/>
</dbReference>
<dbReference type="PANTHER" id="PTHR33254">
    <property type="entry name" value="4-HYDROXY-4-METHYL-2-OXOGLUTARATE ALDOLASE 3-RELATED"/>
    <property type="match status" value="1"/>
</dbReference>
<dbReference type="PANTHER" id="PTHR33254:SF4">
    <property type="entry name" value="4-HYDROXY-4-METHYL-2-OXOGLUTARATE ALDOLASE 3-RELATED"/>
    <property type="match status" value="1"/>
</dbReference>
<dbReference type="Pfam" id="PF03737">
    <property type="entry name" value="RraA-like"/>
    <property type="match status" value="1"/>
</dbReference>
<dbReference type="SUPFAM" id="SSF89562">
    <property type="entry name" value="RraA-like"/>
    <property type="match status" value="1"/>
</dbReference>
<organism>
    <name type="scientific">Corynebacterium jeikeium (strain K411)</name>
    <dbReference type="NCBI Taxonomy" id="306537"/>
    <lineage>
        <taxon>Bacteria</taxon>
        <taxon>Bacillati</taxon>
        <taxon>Actinomycetota</taxon>
        <taxon>Actinomycetes</taxon>
        <taxon>Mycobacteriales</taxon>
        <taxon>Corynebacteriaceae</taxon>
        <taxon>Corynebacterium</taxon>
    </lineage>
</organism>
<reference key="1">
    <citation type="journal article" date="2005" name="J. Bacteriol.">
        <title>Complete genome sequence and analysis of the multiresistant nosocomial pathogen Corynebacterium jeikeium K411, a lipid-requiring bacterium of the human skin flora.</title>
        <authorList>
            <person name="Tauch A."/>
            <person name="Kaiser O."/>
            <person name="Hain T."/>
            <person name="Goesmann A."/>
            <person name="Weisshaar B."/>
            <person name="Albersmeier A."/>
            <person name="Bekel T."/>
            <person name="Bischoff N."/>
            <person name="Brune I."/>
            <person name="Chakraborty T."/>
            <person name="Kalinowski J."/>
            <person name="Meyer F."/>
            <person name="Rupp O."/>
            <person name="Schneiker S."/>
            <person name="Viehoever P."/>
            <person name="Puehler A."/>
        </authorList>
    </citation>
    <scope>NUCLEOTIDE SEQUENCE [LARGE SCALE GENOMIC DNA]</scope>
    <source>
        <strain>K411</strain>
    </source>
</reference>
<evidence type="ECO:0000250" key="1"/>
<evidence type="ECO:0000305" key="2"/>
<gene>
    <name type="ordered locus">jk0900</name>
</gene>
<protein>
    <recommendedName>
        <fullName>Putative 4-hydroxy-4-methyl-2-oxoglutarate aldolase</fullName>
        <shortName>HMG aldolase</shortName>
        <ecNumber>4.1.3.17</ecNumber>
    </recommendedName>
    <alternativeName>
        <fullName>Oxaloacetate decarboxylase</fullName>
        <shortName>OAA decarboxylase</shortName>
        <ecNumber>4.1.1.112</ecNumber>
    </alternativeName>
    <alternativeName>
        <fullName>Regulator of ribonuclease activity homolog</fullName>
    </alternativeName>
    <alternativeName>
        <fullName>RraA-like protein</fullName>
    </alternativeName>
</protein>
<comment type="function">
    <text evidence="1">Catalyzes the aldol cleavage of 4-hydroxy-4-methyl-2-oxoglutarate (HMG) into 2 molecules of pyruvate. Also contains a secondary oxaloacetate (OAA) decarboxylase activity due to the common pyruvate enolate transition state formed following C-C bond cleavage in the retro-aldol and decarboxylation reactions (By similarity).</text>
</comment>
<comment type="catalytic activity">
    <reaction>
        <text>4-hydroxy-4-methyl-2-oxoglutarate = 2 pyruvate</text>
        <dbReference type="Rhea" id="RHEA:22748"/>
        <dbReference type="ChEBI" id="CHEBI:15361"/>
        <dbReference type="ChEBI" id="CHEBI:58276"/>
        <dbReference type="EC" id="4.1.3.17"/>
    </reaction>
</comment>
<comment type="catalytic activity">
    <reaction>
        <text>oxaloacetate + H(+) = pyruvate + CO2</text>
        <dbReference type="Rhea" id="RHEA:15641"/>
        <dbReference type="ChEBI" id="CHEBI:15361"/>
        <dbReference type="ChEBI" id="CHEBI:15378"/>
        <dbReference type="ChEBI" id="CHEBI:16452"/>
        <dbReference type="ChEBI" id="CHEBI:16526"/>
        <dbReference type="EC" id="4.1.1.112"/>
    </reaction>
</comment>
<comment type="cofactor">
    <cofactor evidence="1">
        <name>a divalent metal cation</name>
        <dbReference type="ChEBI" id="CHEBI:60240"/>
    </cofactor>
    <text evidence="1">Divalent metal cation.</text>
</comment>
<comment type="subunit">
    <text evidence="1">Homotrimer.</text>
</comment>
<comment type="similarity">
    <text evidence="2">Belongs to the class II aldolase/RraA-like family.</text>
</comment>
<proteinExistence type="inferred from homology"/>
<accession>Q4JVU3</accession>
<keyword id="KW-0456">Lyase</keyword>
<keyword id="KW-0479">Metal-binding</keyword>
<keyword id="KW-1185">Reference proteome</keyword>
<feature type="chain" id="PRO_1000013835" description="Putative 4-hydroxy-4-methyl-2-oxoglutarate aldolase">
    <location>
        <begin position="1"/>
        <end position="167"/>
    </location>
</feature>
<feature type="binding site" evidence="1">
    <location>
        <begin position="81"/>
        <end position="84"/>
    </location>
    <ligand>
        <name>substrate</name>
    </ligand>
</feature>
<feature type="binding site" evidence="1">
    <location>
        <position position="103"/>
    </location>
    <ligand>
        <name>substrate</name>
    </ligand>
</feature>
<feature type="binding site" evidence="1">
    <location>
        <position position="104"/>
    </location>
    <ligand>
        <name>a divalent metal cation</name>
        <dbReference type="ChEBI" id="CHEBI:60240"/>
    </ligand>
</feature>
<name>RRAAH_CORJK</name>
<sequence length="167" mass="17709">MAEEKLTFIPTADLVDIIGSDVRSCDTQFRDLGGVVEFCGKITTVKCFQDNALLKSVLQEDNPGGVLVIDGDASMHTALVGDIIAGLGKDHGWAGVVINGPIRDSKVIGQMEFGCKALGTNPRKSTKTGEGERDVTVSFGGVDFIPGEYIYCDSDGIIVSDEIVQPV</sequence>